<evidence type="ECO:0000250" key="1"/>
<evidence type="ECO:0000255" key="2"/>
<evidence type="ECO:0000305" key="3"/>
<comment type="function">
    <text evidence="1">This protein is involved in the repair of mismatches in DNA. It is possible that it carries out the mismatch recognition step. This protein has a weak ATPase activity (By similarity).</text>
</comment>
<comment type="similarity">
    <text evidence="3">Belongs to the DNA mismatch repair MutS family.</text>
</comment>
<keyword id="KW-0067">ATP-binding</keyword>
<keyword id="KW-0227">DNA damage</keyword>
<keyword id="KW-0234">DNA repair</keyword>
<keyword id="KW-0238">DNA-binding</keyword>
<keyword id="KW-0547">Nucleotide-binding</keyword>
<organism>
    <name type="scientific">Azotobacter vinelandii</name>
    <dbReference type="NCBI Taxonomy" id="354"/>
    <lineage>
        <taxon>Bacteria</taxon>
        <taxon>Pseudomonadati</taxon>
        <taxon>Pseudomonadota</taxon>
        <taxon>Gammaproteobacteria</taxon>
        <taxon>Pseudomonadales</taxon>
        <taxon>Pseudomonadaceae</taxon>
        <taxon>Azotobacter</taxon>
    </lineage>
</organism>
<feature type="chain" id="PRO_0000115065" description="DNA mismatch repair protein MutS">
    <location>
        <begin position="1"/>
        <end position="855"/>
    </location>
</feature>
<feature type="binding site" evidence="2">
    <location>
        <begin position="613"/>
        <end position="620"/>
    </location>
    <ligand>
        <name>ATP</name>
        <dbReference type="ChEBI" id="CHEBI:30616"/>
    </ligand>
</feature>
<sequence>MESLSQHTPMMQQYWKLKREHPDQLMFYRMGDFYELFYEDAKKAAKLLDITLTARGQSAGKSIPMAGIPFHSVEGYLAKLVKLGESVAICEQIGDPATTKGPVERQVVRIITPGTVSDEALLDERRDNLLAAVVGDERLFGLAILDITSGRFNVQEIQGWENLLAELERLNPAELLYPDDWPAGLPLEKRRGAHRRAPWDFDFDSAYKSLCQQFATQDLKGFGCDGLGLAIGAAGCLLAYARETQRTALPHLRGLRHERLDDTVILAGASRRNLELDVNLSGGRDNTLQSVIDRCQTAMGSRLLGRWLNRPLRDRAVLEARQDTVACLLQDYRFESLQPQLKEIGDVERILARIGLRNARPRDLARLRDALAALPQLQTALSPLEAPHLQALAGNIRTYPELAELLRRAIIDNPPAVIRDGGVLKQGYDAELDELLSLSENAGQFLMDLEAREKARTGLPNLKVGYNRIHGYYIELPRVQAEQAPADYIRRQTLKGAERFITPELKAFEDKALSAKSRALAREKALYEELLEILIAQLAPLQETATALAELDVLANLAERALNLDFNRPRFVEEPCLRIRQGRHPVVEQVLDTPFVANDLELDDNTRMLIITGPNMGGKSTYMRQTALIVLLAHIGSFVPAQSCELSLVDRIFTRIGSSDDLAGGRSTFMVEMSETANILHNASERSLVLMDEVGRGTSTFDGLSLAWAAAEHLAGLRAWTLFATHYFELTVLAESQPVVANVHLSATEHNERIVFLHHVLPGPASQSYGLAVAQLAGVPGPVISRAREHLARLEATSLPHEAPLREAGKPQPPIQSDLFASLPHPLMEELARLKPDDLSPRQALELLYSWKTRL</sequence>
<name>MUTS_AZOVI</name>
<dbReference type="EMBL" id="M63007">
    <property type="protein sequence ID" value="AAA16868.1"/>
    <property type="molecule type" value="Unassigned_DNA"/>
</dbReference>
<dbReference type="PIR" id="A53296">
    <property type="entry name" value="A53296"/>
</dbReference>
<dbReference type="SMR" id="P27345"/>
<dbReference type="GO" id="GO:0005829">
    <property type="term" value="C:cytosol"/>
    <property type="evidence" value="ECO:0007669"/>
    <property type="project" value="TreeGrafter"/>
</dbReference>
<dbReference type="GO" id="GO:0005524">
    <property type="term" value="F:ATP binding"/>
    <property type="evidence" value="ECO:0007669"/>
    <property type="project" value="UniProtKB-UniRule"/>
</dbReference>
<dbReference type="GO" id="GO:0140664">
    <property type="term" value="F:ATP-dependent DNA damage sensor activity"/>
    <property type="evidence" value="ECO:0007669"/>
    <property type="project" value="InterPro"/>
</dbReference>
<dbReference type="GO" id="GO:0003684">
    <property type="term" value="F:damaged DNA binding"/>
    <property type="evidence" value="ECO:0007669"/>
    <property type="project" value="UniProtKB-UniRule"/>
</dbReference>
<dbReference type="GO" id="GO:0030983">
    <property type="term" value="F:mismatched DNA binding"/>
    <property type="evidence" value="ECO:0007669"/>
    <property type="project" value="InterPro"/>
</dbReference>
<dbReference type="GO" id="GO:0006298">
    <property type="term" value="P:mismatch repair"/>
    <property type="evidence" value="ECO:0007669"/>
    <property type="project" value="UniProtKB-UniRule"/>
</dbReference>
<dbReference type="CDD" id="cd03284">
    <property type="entry name" value="ABC_MutS1"/>
    <property type="match status" value="1"/>
</dbReference>
<dbReference type="FunFam" id="1.10.1420.10:FF:000002">
    <property type="entry name" value="DNA mismatch repair protein MutS"/>
    <property type="match status" value="1"/>
</dbReference>
<dbReference type="FunFam" id="3.40.1170.10:FF:000001">
    <property type="entry name" value="DNA mismatch repair protein MutS"/>
    <property type="match status" value="1"/>
</dbReference>
<dbReference type="FunFam" id="3.40.50.300:FF:000283">
    <property type="entry name" value="DNA mismatch repair protein MutS"/>
    <property type="match status" value="1"/>
</dbReference>
<dbReference type="Gene3D" id="1.10.1420.10">
    <property type="match status" value="2"/>
</dbReference>
<dbReference type="Gene3D" id="6.10.140.430">
    <property type="match status" value="1"/>
</dbReference>
<dbReference type="Gene3D" id="3.40.1170.10">
    <property type="entry name" value="DNA repair protein MutS, domain I"/>
    <property type="match status" value="1"/>
</dbReference>
<dbReference type="Gene3D" id="3.30.420.110">
    <property type="entry name" value="MutS, connector domain"/>
    <property type="match status" value="1"/>
</dbReference>
<dbReference type="Gene3D" id="3.40.50.300">
    <property type="entry name" value="P-loop containing nucleotide triphosphate hydrolases"/>
    <property type="match status" value="1"/>
</dbReference>
<dbReference type="HAMAP" id="MF_00096">
    <property type="entry name" value="MutS"/>
    <property type="match status" value="1"/>
</dbReference>
<dbReference type="InterPro" id="IPR005748">
    <property type="entry name" value="DNA_mismatch_repair_MutS"/>
</dbReference>
<dbReference type="InterPro" id="IPR007695">
    <property type="entry name" value="DNA_mismatch_repair_MutS-lik_N"/>
</dbReference>
<dbReference type="InterPro" id="IPR017261">
    <property type="entry name" value="DNA_mismatch_repair_MutS/MSH"/>
</dbReference>
<dbReference type="InterPro" id="IPR000432">
    <property type="entry name" value="DNA_mismatch_repair_MutS_C"/>
</dbReference>
<dbReference type="InterPro" id="IPR007861">
    <property type="entry name" value="DNA_mismatch_repair_MutS_clamp"/>
</dbReference>
<dbReference type="InterPro" id="IPR007696">
    <property type="entry name" value="DNA_mismatch_repair_MutS_core"/>
</dbReference>
<dbReference type="InterPro" id="IPR016151">
    <property type="entry name" value="DNA_mismatch_repair_MutS_N"/>
</dbReference>
<dbReference type="InterPro" id="IPR036187">
    <property type="entry name" value="DNA_mismatch_repair_MutS_sf"/>
</dbReference>
<dbReference type="InterPro" id="IPR007860">
    <property type="entry name" value="DNA_mmatch_repair_MutS_con_dom"/>
</dbReference>
<dbReference type="InterPro" id="IPR045076">
    <property type="entry name" value="MutS"/>
</dbReference>
<dbReference type="InterPro" id="IPR036678">
    <property type="entry name" value="MutS_con_dom_sf"/>
</dbReference>
<dbReference type="InterPro" id="IPR027417">
    <property type="entry name" value="P-loop_NTPase"/>
</dbReference>
<dbReference type="NCBIfam" id="TIGR01070">
    <property type="entry name" value="mutS1"/>
    <property type="match status" value="1"/>
</dbReference>
<dbReference type="NCBIfam" id="NF003810">
    <property type="entry name" value="PRK05399.1"/>
    <property type="match status" value="1"/>
</dbReference>
<dbReference type="PANTHER" id="PTHR11361:SF34">
    <property type="entry name" value="DNA MISMATCH REPAIR PROTEIN MSH1, MITOCHONDRIAL"/>
    <property type="match status" value="1"/>
</dbReference>
<dbReference type="PANTHER" id="PTHR11361">
    <property type="entry name" value="DNA MISMATCH REPAIR PROTEIN MUTS FAMILY MEMBER"/>
    <property type="match status" value="1"/>
</dbReference>
<dbReference type="Pfam" id="PF01624">
    <property type="entry name" value="MutS_I"/>
    <property type="match status" value="1"/>
</dbReference>
<dbReference type="Pfam" id="PF05188">
    <property type="entry name" value="MutS_II"/>
    <property type="match status" value="1"/>
</dbReference>
<dbReference type="Pfam" id="PF05192">
    <property type="entry name" value="MutS_III"/>
    <property type="match status" value="1"/>
</dbReference>
<dbReference type="Pfam" id="PF05190">
    <property type="entry name" value="MutS_IV"/>
    <property type="match status" value="1"/>
</dbReference>
<dbReference type="Pfam" id="PF00488">
    <property type="entry name" value="MutS_V"/>
    <property type="match status" value="1"/>
</dbReference>
<dbReference type="PIRSF" id="PIRSF037677">
    <property type="entry name" value="DNA_mis_repair_Msh6"/>
    <property type="match status" value="1"/>
</dbReference>
<dbReference type="SMART" id="SM00534">
    <property type="entry name" value="MUTSac"/>
    <property type="match status" value="1"/>
</dbReference>
<dbReference type="SMART" id="SM00533">
    <property type="entry name" value="MUTSd"/>
    <property type="match status" value="1"/>
</dbReference>
<dbReference type="SUPFAM" id="SSF55271">
    <property type="entry name" value="DNA repair protein MutS, domain I"/>
    <property type="match status" value="1"/>
</dbReference>
<dbReference type="SUPFAM" id="SSF53150">
    <property type="entry name" value="DNA repair protein MutS, domain II"/>
    <property type="match status" value="1"/>
</dbReference>
<dbReference type="SUPFAM" id="SSF48334">
    <property type="entry name" value="DNA repair protein MutS, domain III"/>
    <property type="match status" value="1"/>
</dbReference>
<dbReference type="SUPFAM" id="SSF52540">
    <property type="entry name" value="P-loop containing nucleoside triphosphate hydrolases"/>
    <property type="match status" value="1"/>
</dbReference>
<dbReference type="PROSITE" id="PS00486">
    <property type="entry name" value="DNA_MISMATCH_REPAIR_2"/>
    <property type="match status" value="1"/>
</dbReference>
<protein>
    <recommendedName>
        <fullName>DNA mismatch repair protein MutS</fullName>
    </recommendedName>
</protein>
<gene>
    <name type="primary">mutS</name>
</gene>
<reference key="1">
    <citation type="journal article" date="1993" name="J. Bacteriol.">
        <title>Azotobacter vinelandii mutS: nucleotide sequence and mutant analysis.</title>
        <authorList>
            <person name="Le O."/>
            <person name="Shen B."/>
            <person name="Iismaa S.E."/>
            <person name="Burgess B.K."/>
        </authorList>
    </citation>
    <scope>NUCLEOTIDE SEQUENCE [GENOMIC DNA]</scope>
    <source>
        <strain>ATCC 13705 / OP1 / DSM 366 / NCIMB 11614 / LMG 3878 / UW</strain>
    </source>
</reference>
<proteinExistence type="inferred from homology"/>
<accession>P27345</accession>